<evidence type="ECO:0000250" key="1"/>
<evidence type="ECO:0000305" key="2"/>
<comment type="function">
    <text>Has antimicrobial activity.</text>
</comment>
<comment type="subcellular location">
    <subcellularLocation>
        <location>Secreted</location>
    </subcellularLocation>
</comment>
<comment type="similarity">
    <text evidence="2">Belongs to the bacteriocin class IIA/YGNGV family.</text>
</comment>
<protein>
    <recommendedName>
        <fullName>Bacteriocin bavaricin-MN</fullName>
    </recommendedName>
</protein>
<proteinExistence type="evidence at protein level"/>
<sequence length="42" mass="4402">TKYYGNGVYCNSKKCWVDWGQAAGGIGQTVVXGWLGGAIPGK</sequence>
<name>BAVM_LATSK</name>
<organism>
    <name type="scientific">Latilactobacillus sakei</name>
    <name type="common">Lactobacillus sakei</name>
    <dbReference type="NCBI Taxonomy" id="1599"/>
    <lineage>
        <taxon>Bacteria</taxon>
        <taxon>Bacillati</taxon>
        <taxon>Bacillota</taxon>
        <taxon>Bacilli</taxon>
        <taxon>Lactobacillales</taxon>
        <taxon>Lactobacillaceae</taxon>
        <taxon>Latilactobacillus</taxon>
    </lineage>
</organism>
<feature type="peptide" id="PRO_0000110574" description="Bacteriocin bavaricin-MN">
    <location>
        <begin position="1"/>
        <end position="42"/>
    </location>
</feature>
<feature type="disulfide bond" evidence="1">
    <location>
        <begin position="10"/>
        <end position="15"/>
    </location>
</feature>
<feature type="unsure residue">
    <location>
        <position position="10"/>
    </location>
</feature>
<feature type="unsure residue">
    <location>
        <position position="15"/>
    </location>
</feature>
<dbReference type="TCDB" id="1.C.24.1.9">
    <property type="family name" value="the pediocin (pediocin) family"/>
</dbReference>
<dbReference type="GO" id="GO:0005576">
    <property type="term" value="C:extracellular region"/>
    <property type="evidence" value="ECO:0007669"/>
    <property type="project" value="UniProtKB-SubCell"/>
</dbReference>
<dbReference type="GO" id="GO:0042742">
    <property type="term" value="P:defense response to bacterium"/>
    <property type="evidence" value="ECO:0007669"/>
    <property type="project" value="UniProtKB-KW"/>
</dbReference>
<dbReference type="GO" id="GO:0031640">
    <property type="term" value="P:killing of cells of another organism"/>
    <property type="evidence" value="ECO:0007669"/>
    <property type="project" value="UniProtKB-KW"/>
</dbReference>
<dbReference type="Gene3D" id="1.20.5.130">
    <property type="match status" value="1"/>
</dbReference>
<dbReference type="InterPro" id="IPR002633">
    <property type="entry name" value="Bacteriocin_IIa"/>
</dbReference>
<dbReference type="InterPro" id="IPR023384">
    <property type="entry name" value="Bacteriocin_IIa_CS"/>
</dbReference>
<dbReference type="InterPro" id="IPR023388">
    <property type="entry name" value="Bacteriocin_IIa_dom_sf"/>
</dbReference>
<dbReference type="Pfam" id="PF01721">
    <property type="entry name" value="Bacteriocin_II"/>
    <property type="match status" value="1"/>
</dbReference>
<dbReference type="PROSITE" id="PS60030">
    <property type="entry name" value="BACTERIOCIN_IIA"/>
    <property type="match status" value="1"/>
</dbReference>
<accession>P80493</accession>
<keyword id="KW-0044">Antibiotic</keyword>
<keyword id="KW-0929">Antimicrobial</keyword>
<keyword id="KW-0078">Bacteriocin</keyword>
<keyword id="KW-0903">Direct protein sequencing</keyword>
<keyword id="KW-1015">Disulfide bond</keyword>
<keyword id="KW-0964">Secreted</keyword>
<reference key="1">
    <citation type="journal article" date="1996" name="Appl. Environ. Microbiol.">
        <title>Purification of the bacteriocin bavaricin MN and characterization of its mode of action against Listeria monocytogenes Scott A cells and lipid vesicles.</title>
        <authorList>
            <person name="Kaiser A.L."/>
            <person name="Montville T.J."/>
        </authorList>
    </citation>
    <scope>PROTEIN SEQUENCE</scope>
    <source>
        <strain>MN</strain>
    </source>
</reference>